<proteinExistence type="inferred from homology"/>
<reference key="1">
    <citation type="journal article" date="2007" name="PLoS Genet.">
        <title>The complete genome sequence of Yersinia pseudotuberculosis IP31758, the causative agent of Far East scarlet-like fever.</title>
        <authorList>
            <person name="Eppinger M."/>
            <person name="Rosovitz M.J."/>
            <person name="Fricke W.F."/>
            <person name="Rasko D.A."/>
            <person name="Kokorina G."/>
            <person name="Fayolle C."/>
            <person name="Lindler L.E."/>
            <person name="Carniel E."/>
            <person name="Ravel J."/>
        </authorList>
    </citation>
    <scope>NUCLEOTIDE SEQUENCE [LARGE SCALE GENOMIC DNA]</scope>
    <source>
        <strain>IP 31758</strain>
    </source>
</reference>
<name>ACPS_YERP3</name>
<accession>A7FFU3</accession>
<gene>
    <name evidence="1" type="primary">acpS</name>
    <name type="ordered locus">YpsIP31758_1140</name>
</gene>
<comment type="function">
    <text evidence="1">Transfers the 4'-phosphopantetheine moiety from coenzyme A to a Ser of acyl-carrier-protein.</text>
</comment>
<comment type="catalytic activity">
    <reaction evidence="1">
        <text>apo-[ACP] + CoA = holo-[ACP] + adenosine 3',5'-bisphosphate + H(+)</text>
        <dbReference type="Rhea" id="RHEA:12068"/>
        <dbReference type="Rhea" id="RHEA-COMP:9685"/>
        <dbReference type="Rhea" id="RHEA-COMP:9690"/>
        <dbReference type="ChEBI" id="CHEBI:15378"/>
        <dbReference type="ChEBI" id="CHEBI:29999"/>
        <dbReference type="ChEBI" id="CHEBI:57287"/>
        <dbReference type="ChEBI" id="CHEBI:58343"/>
        <dbReference type="ChEBI" id="CHEBI:64479"/>
        <dbReference type="EC" id="2.7.8.7"/>
    </reaction>
</comment>
<comment type="cofactor">
    <cofactor evidence="1">
        <name>Mg(2+)</name>
        <dbReference type="ChEBI" id="CHEBI:18420"/>
    </cofactor>
</comment>
<comment type="subcellular location">
    <subcellularLocation>
        <location evidence="1">Cytoplasm</location>
    </subcellularLocation>
</comment>
<comment type="similarity">
    <text evidence="1">Belongs to the P-Pant transferase superfamily. AcpS family.</text>
</comment>
<feature type="chain" id="PRO_1000057674" description="Holo-[acyl-carrier-protein] synthase">
    <location>
        <begin position="1"/>
        <end position="126"/>
    </location>
</feature>
<feature type="binding site" evidence="1">
    <location>
        <position position="9"/>
    </location>
    <ligand>
        <name>Mg(2+)</name>
        <dbReference type="ChEBI" id="CHEBI:18420"/>
    </ligand>
</feature>
<feature type="binding site" evidence="1">
    <location>
        <position position="58"/>
    </location>
    <ligand>
        <name>Mg(2+)</name>
        <dbReference type="ChEBI" id="CHEBI:18420"/>
    </ligand>
</feature>
<keyword id="KW-0963">Cytoplasm</keyword>
<keyword id="KW-0275">Fatty acid biosynthesis</keyword>
<keyword id="KW-0276">Fatty acid metabolism</keyword>
<keyword id="KW-0444">Lipid biosynthesis</keyword>
<keyword id="KW-0443">Lipid metabolism</keyword>
<keyword id="KW-0460">Magnesium</keyword>
<keyword id="KW-0479">Metal-binding</keyword>
<keyword id="KW-0808">Transferase</keyword>
<organism>
    <name type="scientific">Yersinia pseudotuberculosis serotype O:1b (strain IP 31758)</name>
    <dbReference type="NCBI Taxonomy" id="349747"/>
    <lineage>
        <taxon>Bacteria</taxon>
        <taxon>Pseudomonadati</taxon>
        <taxon>Pseudomonadota</taxon>
        <taxon>Gammaproteobacteria</taxon>
        <taxon>Enterobacterales</taxon>
        <taxon>Yersiniaceae</taxon>
        <taxon>Yersinia</taxon>
    </lineage>
</organism>
<dbReference type="EC" id="2.7.8.7" evidence="1"/>
<dbReference type="EMBL" id="CP000720">
    <property type="protein sequence ID" value="ABS46619.1"/>
    <property type="molecule type" value="Genomic_DNA"/>
</dbReference>
<dbReference type="RefSeq" id="WP_011192825.1">
    <property type="nucleotide sequence ID" value="NC_009708.1"/>
</dbReference>
<dbReference type="SMR" id="A7FFU3"/>
<dbReference type="GeneID" id="49785104"/>
<dbReference type="KEGG" id="ypi:YpsIP31758_1140"/>
<dbReference type="HOGENOM" id="CLU_089696_3_1_6"/>
<dbReference type="Proteomes" id="UP000002412">
    <property type="component" value="Chromosome"/>
</dbReference>
<dbReference type="GO" id="GO:0005737">
    <property type="term" value="C:cytoplasm"/>
    <property type="evidence" value="ECO:0007669"/>
    <property type="project" value="UniProtKB-SubCell"/>
</dbReference>
<dbReference type="GO" id="GO:0008897">
    <property type="term" value="F:holo-[acyl-carrier-protein] synthase activity"/>
    <property type="evidence" value="ECO:0007669"/>
    <property type="project" value="UniProtKB-UniRule"/>
</dbReference>
<dbReference type="GO" id="GO:0000287">
    <property type="term" value="F:magnesium ion binding"/>
    <property type="evidence" value="ECO:0007669"/>
    <property type="project" value="UniProtKB-UniRule"/>
</dbReference>
<dbReference type="GO" id="GO:0006633">
    <property type="term" value="P:fatty acid biosynthetic process"/>
    <property type="evidence" value="ECO:0007669"/>
    <property type="project" value="UniProtKB-UniRule"/>
</dbReference>
<dbReference type="FunFam" id="3.90.470.20:FF:000001">
    <property type="entry name" value="Holo-[acyl-carrier-protein] synthase"/>
    <property type="match status" value="1"/>
</dbReference>
<dbReference type="Gene3D" id="3.90.470.20">
    <property type="entry name" value="4'-phosphopantetheinyl transferase domain"/>
    <property type="match status" value="1"/>
</dbReference>
<dbReference type="HAMAP" id="MF_00101">
    <property type="entry name" value="AcpS"/>
    <property type="match status" value="1"/>
</dbReference>
<dbReference type="InterPro" id="IPR008278">
    <property type="entry name" value="4-PPantetheinyl_Trfase_dom"/>
</dbReference>
<dbReference type="InterPro" id="IPR037143">
    <property type="entry name" value="4-PPantetheinyl_Trfase_dom_sf"/>
</dbReference>
<dbReference type="InterPro" id="IPR002582">
    <property type="entry name" value="ACPS"/>
</dbReference>
<dbReference type="InterPro" id="IPR004568">
    <property type="entry name" value="Ppantetheine-prot_Trfase_dom"/>
</dbReference>
<dbReference type="NCBIfam" id="TIGR00516">
    <property type="entry name" value="acpS"/>
    <property type="match status" value="1"/>
</dbReference>
<dbReference type="NCBIfam" id="TIGR00556">
    <property type="entry name" value="pantethn_trn"/>
    <property type="match status" value="1"/>
</dbReference>
<dbReference type="Pfam" id="PF01648">
    <property type="entry name" value="ACPS"/>
    <property type="match status" value="1"/>
</dbReference>
<dbReference type="SUPFAM" id="SSF56214">
    <property type="entry name" value="4'-phosphopantetheinyl transferase"/>
    <property type="match status" value="1"/>
</dbReference>
<evidence type="ECO:0000255" key="1">
    <source>
        <dbReference type="HAMAP-Rule" id="MF_00101"/>
    </source>
</evidence>
<sequence>MAILGLGTDIVEISRIEAVVERTGERLARRILSPSEWQHYQQHQQPVRFLAKRFAVKEAAAKAFGTGIRNGLAFNQFEVVNDALGKPTLRLHSRAAELAVELGVKSLHVTLADERRYACATVIIES</sequence>
<protein>
    <recommendedName>
        <fullName evidence="1">Holo-[acyl-carrier-protein] synthase</fullName>
        <shortName evidence="1">Holo-ACP synthase</shortName>
        <ecNumber evidence="1">2.7.8.7</ecNumber>
    </recommendedName>
    <alternativeName>
        <fullName evidence="1">4'-phosphopantetheinyl transferase AcpS</fullName>
    </alternativeName>
</protein>